<accession>Q10242</accession>
<sequence>MTVTPINPTNQPYKYVFVVIGPAGSGKTTMAKAVSEKLGFEYIEGDDLHPKANIEKMSQGHPLNDNDRWGWLHNCGGACAMELDKESIKGVVLTCSALKRSYRDILRSSLEHRPAILRFIYLAASRETLIKRTTSRKNHYMKADMVESQLAILEAPTADEKDVITISVENGKEQSEEECLDIVHKMVNENKQP</sequence>
<keyword id="KW-0067">ATP-binding</keyword>
<keyword id="KW-0311">Gluconate utilization</keyword>
<keyword id="KW-0418">Kinase</keyword>
<keyword id="KW-0547">Nucleotide-binding</keyword>
<keyword id="KW-1185">Reference proteome</keyword>
<keyword id="KW-0808">Transferase</keyword>
<evidence type="ECO:0000255" key="1"/>
<evidence type="ECO:0000305" key="2"/>
<feature type="chain" id="PRO_0000087538" description="Probable gluconokinase">
    <location>
        <begin position="1"/>
        <end position="193"/>
    </location>
</feature>
<feature type="binding site" evidence="1">
    <location>
        <begin position="21"/>
        <end position="28"/>
    </location>
    <ligand>
        <name>ATP</name>
        <dbReference type="ChEBI" id="CHEBI:30616"/>
    </ligand>
</feature>
<organism>
    <name type="scientific">Schizosaccharomyces pombe (strain 972 / ATCC 24843)</name>
    <name type="common">Fission yeast</name>
    <dbReference type="NCBI Taxonomy" id="284812"/>
    <lineage>
        <taxon>Eukaryota</taxon>
        <taxon>Fungi</taxon>
        <taxon>Dikarya</taxon>
        <taxon>Ascomycota</taxon>
        <taxon>Taphrinomycotina</taxon>
        <taxon>Schizosaccharomycetes</taxon>
        <taxon>Schizosaccharomycetales</taxon>
        <taxon>Schizosaccharomycetaceae</taxon>
        <taxon>Schizosaccharomyces</taxon>
    </lineage>
</organism>
<name>GNTK_SCHPO</name>
<reference key="1">
    <citation type="journal article" date="2002" name="Nature">
        <title>The genome sequence of Schizosaccharomyces pombe.</title>
        <authorList>
            <person name="Wood V."/>
            <person name="Gwilliam R."/>
            <person name="Rajandream M.A."/>
            <person name="Lyne M.H."/>
            <person name="Lyne R."/>
            <person name="Stewart A."/>
            <person name="Sgouros J.G."/>
            <person name="Peat N."/>
            <person name="Hayles J."/>
            <person name="Baker S.G."/>
            <person name="Basham D."/>
            <person name="Bowman S."/>
            <person name="Brooks K."/>
            <person name="Brown D."/>
            <person name="Brown S."/>
            <person name="Chillingworth T."/>
            <person name="Churcher C.M."/>
            <person name="Collins M."/>
            <person name="Connor R."/>
            <person name="Cronin A."/>
            <person name="Davis P."/>
            <person name="Feltwell T."/>
            <person name="Fraser A."/>
            <person name="Gentles S."/>
            <person name="Goble A."/>
            <person name="Hamlin N."/>
            <person name="Harris D.E."/>
            <person name="Hidalgo J."/>
            <person name="Hodgson G."/>
            <person name="Holroyd S."/>
            <person name="Hornsby T."/>
            <person name="Howarth S."/>
            <person name="Huckle E.J."/>
            <person name="Hunt S."/>
            <person name="Jagels K."/>
            <person name="James K.D."/>
            <person name="Jones L."/>
            <person name="Jones M."/>
            <person name="Leather S."/>
            <person name="McDonald S."/>
            <person name="McLean J."/>
            <person name="Mooney P."/>
            <person name="Moule S."/>
            <person name="Mungall K.L."/>
            <person name="Murphy L.D."/>
            <person name="Niblett D."/>
            <person name="Odell C."/>
            <person name="Oliver K."/>
            <person name="O'Neil S."/>
            <person name="Pearson D."/>
            <person name="Quail M.A."/>
            <person name="Rabbinowitsch E."/>
            <person name="Rutherford K.M."/>
            <person name="Rutter S."/>
            <person name="Saunders D."/>
            <person name="Seeger K."/>
            <person name="Sharp S."/>
            <person name="Skelton J."/>
            <person name="Simmonds M.N."/>
            <person name="Squares R."/>
            <person name="Squares S."/>
            <person name="Stevens K."/>
            <person name="Taylor K."/>
            <person name="Taylor R.G."/>
            <person name="Tivey A."/>
            <person name="Walsh S.V."/>
            <person name="Warren T."/>
            <person name="Whitehead S."/>
            <person name="Woodward J.R."/>
            <person name="Volckaert G."/>
            <person name="Aert R."/>
            <person name="Robben J."/>
            <person name="Grymonprez B."/>
            <person name="Weltjens I."/>
            <person name="Vanstreels E."/>
            <person name="Rieger M."/>
            <person name="Schaefer M."/>
            <person name="Mueller-Auer S."/>
            <person name="Gabel C."/>
            <person name="Fuchs M."/>
            <person name="Duesterhoeft A."/>
            <person name="Fritzc C."/>
            <person name="Holzer E."/>
            <person name="Moestl D."/>
            <person name="Hilbert H."/>
            <person name="Borzym K."/>
            <person name="Langer I."/>
            <person name="Beck A."/>
            <person name="Lehrach H."/>
            <person name="Reinhardt R."/>
            <person name="Pohl T.M."/>
            <person name="Eger P."/>
            <person name="Zimmermann W."/>
            <person name="Wedler H."/>
            <person name="Wambutt R."/>
            <person name="Purnelle B."/>
            <person name="Goffeau A."/>
            <person name="Cadieu E."/>
            <person name="Dreano S."/>
            <person name="Gloux S."/>
            <person name="Lelaure V."/>
            <person name="Mottier S."/>
            <person name="Galibert F."/>
            <person name="Aves S.J."/>
            <person name="Xiang Z."/>
            <person name="Hunt C."/>
            <person name="Moore K."/>
            <person name="Hurst S.M."/>
            <person name="Lucas M."/>
            <person name="Rochet M."/>
            <person name="Gaillardin C."/>
            <person name="Tallada V.A."/>
            <person name="Garzon A."/>
            <person name="Thode G."/>
            <person name="Daga R.R."/>
            <person name="Cruzado L."/>
            <person name="Jimenez J."/>
            <person name="Sanchez M."/>
            <person name="del Rey F."/>
            <person name="Benito J."/>
            <person name="Dominguez A."/>
            <person name="Revuelta J.L."/>
            <person name="Moreno S."/>
            <person name="Armstrong J."/>
            <person name="Forsburg S.L."/>
            <person name="Cerutti L."/>
            <person name="Lowe T."/>
            <person name="McCombie W.R."/>
            <person name="Paulsen I."/>
            <person name="Potashkin J."/>
            <person name="Shpakovski G.V."/>
            <person name="Ussery D."/>
            <person name="Barrell B.G."/>
            <person name="Nurse P."/>
        </authorList>
    </citation>
    <scope>NUCLEOTIDE SEQUENCE [LARGE SCALE GENOMIC DNA]</scope>
    <source>
        <strain>972 / ATCC 24843</strain>
    </source>
</reference>
<gene>
    <name type="ORF">SPAC4G9.12</name>
</gene>
<comment type="catalytic activity">
    <reaction>
        <text>D-gluconate + ATP = 6-phospho-D-gluconate + ADP + H(+)</text>
        <dbReference type="Rhea" id="RHEA:19433"/>
        <dbReference type="ChEBI" id="CHEBI:15378"/>
        <dbReference type="ChEBI" id="CHEBI:18391"/>
        <dbReference type="ChEBI" id="CHEBI:30616"/>
        <dbReference type="ChEBI" id="CHEBI:58759"/>
        <dbReference type="ChEBI" id="CHEBI:456216"/>
        <dbReference type="EC" id="2.7.1.12"/>
    </reaction>
</comment>
<comment type="pathway">
    <text>Carbohydrate acid metabolism; D-gluconate degradation.</text>
</comment>
<comment type="similarity">
    <text evidence="2">Belongs to the gluconokinase GntK/GntV family.</text>
</comment>
<protein>
    <recommendedName>
        <fullName>Probable gluconokinase</fullName>
        <ecNumber>2.7.1.12</ecNumber>
    </recommendedName>
    <alternativeName>
        <fullName>Gluconate kinase</fullName>
    </alternativeName>
</protein>
<dbReference type="EC" id="2.7.1.12"/>
<dbReference type="EMBL" id="CU329670">
    <property type="protein sequence ID" value="CAA93562.1"/>
    <property type="molecule type" value="Genomic_DNA"/>
</dbReference>
<dbReference type="PIR" id="T38871">
    <property type="entry name" value="T38871"/>
</dbReference>
<dbReference type="RefSeq" id="NP_593694.1">
    <property type="nucleotide sequence ID" value="NM_001019126.2"/>
</dbReference>
<dbReference type="SMR" id="Q10242"/>
<dbReference type="BioGRID" id="279807">
    <property type="interactions" value="13"/>
</dbReference>
<dbReference type="FunCoup" id="Q10242">
    <property type="interactions" value="668"/>
</dbReference>
<dbReference type="STRING" id="284812.Q10242"/>
<dbReference type="iPTMnet" id="Q10242"/>
<dbReference type="PaxDb" id="4896-SPAC4G9.12.1"/>
<dbReference type="EnsemblFungi" id="SPAC4G9.12.1">
    <property type="protein sequence ID" value="SPAC4G9.12.1:pep"/>
    <property type="gene ID" value="SPAC4G9.12"/>
</dbReference>
<dbReference type="PomBase" id="SPAC4G9.12"/>
<dbReference type="VEuPathDB" id="FungiDB:SPAC4G9.12"/>
<dbReference type="eggNOG" id="KOG3354">
    <property type="taxonomic scope" value="Eukaryota"/>
</dbReference>
<dbReference type="HOGENOM" id="CLU_077168_0_2_1"/>
<dbReference type="InParanoid" id="Q10242"/>
<dbReference type="OMA" id="HFIYLRA"/>
<dbReference type="PhylomeDB" id="Q10242"/>
<dbReference type="BRENDA" id="2.7.1.12">
    <property type="organism ID" value="5613"/>
</dbReference>
<dbReference type="UniPathway" id="UPA00792"/>
<dbReference type="PRO" id="PR:Q10242"/>
<dbReference type="Proteomes" id="UP000002485">
    <property type="component" value="Chromosome I"/>
</dbReference>
<dbReference type="GO" id="GO:0005829">
    <property type="term" value="C:cytosol"/>
    <property type="evidence" value="ECO:0007005"/>
    <property type="project" value="PomBase"/>
</dbReference>
<dbReference type="GO" id="GO:0005634">
    <property type="term" value="C:nucleus"/>
    <property type="evidence" value="ECO:0007005"/>
    <property type="project" value="PomBase"/>
</dbReference>
<dbReference type="GO" id="GO:0005524">
    <property type="term" value="F:ATP binding"/>
    <property type="evidence" value="ECO:0007669"/>
    <property type="project" value="UniProtKB-KW"/>
</dbReference>
<dbReference type="GO" id="GO:0046316">
    <property type="term" value="F:gluconokinase activity"/>
    <property type="evidence" value="ECO:0000314"/>
    <property type="project" value="PomBase"/>
</dbReference>
<dbReference type="GO" id="GO:0019521">
    <property type="term" value="P:D-gluconate metabolic process"/>
    <property type="evidence" value="ECO:0007669"/>
    <property type="project" value="UniProtKB-KW"/>
</dbReference>
<dbReference type="GO" id="GO:0061688">
    <property type="term" value="P:glycolytic process via Entner-Doudoroff Pathway"/>
    <property type="evidence" value="ECO:0000314"/>
    <property type="project" value="PomBase"/>
</dbReference>
<dbReference type="GO" id="GO:0009051">
    <property type="term" value="P:pentose-phosphate shunt, oxidative branch"/>
    <property type="evidence" value="ECO:0000269"/>
    <property type="project" value="PomBase"/>
</dbReference>
<dbReference type="CDD" id="cd02021">
    <property type="entry name" value="GntK"/>
    <property type="match status" value="1"/>
</dbReference>
<dbReference type="Gene3D" id="3.40.50.300">
    <property type="entry name" value="P-loop containing nucleotide triphosphate hydrolases"/>
    <property type="match status" value="1"/>
</dbReference>
<dbReference type="InterPro" id="IPR027417">
    <property type="entry name" value="P-loop_NTPase"/>
</dbReference>
<dbReference type="InterPro" id="IPR006001">
    <property type="entry name" value="Therm_gnt_kin"/>
</dbReference>
<dbReference type="NCBIfam" id="TIGR01313">
    <property type="entry name" value="therm_gnt_kin"/>
    <property type="match status" value="1"/>
</dbReference>
<dbReference type="PANTHER" id="PTHR43442">
    <property type="entry name" value="GLUCONOKINASE-RELATED"/>
    <property type="match status" value="1"/>
</dbReference>
<dbReference type="PANTHER" id="PTHR43442:SF3">
    <property type="entry name" value="GLUCONOKINASE-RELATED"/>
    <property type="match status" value="1"/>
</dbReference>
<dbReference type="Pfam" id="PF13671">
    <property type="entry name" value="AAA_33"/>
    <property type="match status" value="1"/>
</dbReference>
<dbReference type="SUPFAM" id="SSF52540">
    <property type="entry name" value="P-loop containing nucleoside triphosphate hydrolases"/>
    <property type="match status" value="1"/>
</dbReference>
<proteinExistence type="inferred from homology"/>